<name>YBED_ECOL6</name>
<gene>
    <name type="primary">ybeD</name>
    <name type="ordered locus">c0721</name>
</gene>
<comment type="similarity">
    <text evidence="1">Belongs to the UPF0250 family.</text>
</comment>
<sequence>MKTKLNELLEFPTPFTYKVMGQALPELVDQVVEVVQRHAPGDYTPTVKPSSKGNYHSVSITINATHIEQVETLYEELGKIDIVRMVL</sequence>
<protein>
    <recommendedName>
        <fullName>UPF0250 protein YbeD</fullName>
    </recommendedName>
</protein>
<accession>P0A8J5</accession>
<accession>P30977</accession>
<reference key="1">
    <citation type="journal article" date="2002" name="Proc. Natl. Acad. Sci. U.S.A.">
        <title>Extensive mosaic structure revealed by the complete genome sequence of uropathogenic Escherichia coli.</title>
        <authorList>
            <person name="Welch R.A."/>
            <person name="Burland V."/>
            <person name="Plunkett G. III"/>
            <person name="Redford P."/>
            <person name="Roesch P."/>
            <person name="Rasko D."/>
            <person name="Buckles E.L."/>
            <person name="Liou S.-R."/>
            <person name="Boutin A."/>
            <person name="Hackett J."/>
            <person name="Stroud D."/>
            <person name="Mayhew G.F."/>
            <person name="Rose D.J."/>
            <person name="Zhou S."/>
            <person name="Schwartz D.C."/>
            <person name="Perna N.T."/>
            <person name="Mobley H.L.T."/>
            <person name="Donnenberg M.S."/>
            <person name="Blattner F.R."/>
        </authorList>
    </citation>
    <scope>NUCLEOTIDE SEQUENCE [LARGE SCALE GENOMIC DNA]</scope>
    <source>
        <strain>CFT073 / ATCC 700928 / UPEC</strain>
    </source>
</reference>
<organism>
    <name type="scientific">Escherichia coli O6:H1 (strain CFT073 / ATCC 700928 / UPEC)</name>
    <dbReference type="NCBI Taxonomy" id="199310"/>
    <lineage>
        <taxon>Bacteria</taxon>
        <taxon>Pseudomonadati</taxon>
        <taxon>Pseudomonadota</taxon>
        <taxon>Gammaproteobacteria</taxon>
        <taxon>Enterobacterales</taxon>
        <taxon>Enterobacteriaceae</taxon>
        <taxon>Escherichia</taxon>
    </lineage>
</organism>
<keyword id="KW-1185">Reference proteome</keyword>
<proteinExistence type="inferred from homology"/>
<dbReference type="EMBL" id="AE014075">
    <property type="protein sequence ID" value="AAN79194.1"/>
    <property type="molecule type" value="Genomic_DNA"/>
</dbReference>
<dbReference type="RefSeq" id="WP_000850550.1">
    <property type="nucleotide sequence ID" value="NZ_CP051263.1"/>
</dbReference>
<dbReference type="SMR" id="P0A8J5"/>
<dbReference type="STRING" id="199310.c0721"/>
<dbReference type="GeneID" id="93776851"/>
<dbReference type="KEGG" id="ecc:c0721"/>
<dbReference type="eggNOG" id="COG2921">
    <property type="taxonomic scope" value="Bacteria"/>
</dbReference>
<dbReference type="HOGENOM" id="CLU_161438_2_1_6"/>
<dbReference type="BioCyc" id="ECOL199310:C0721-MONOMER"/>
<dbReference type="Proteomes" id="UP000001410">
    <property type="component" value="Chromosome"/>
</dbReference>
<dbReference type="GO" id="GO:0005829">
    <property type="term" value="C:cytosol"/>
    <property type="evidence" value="ECO:0007669"/>
    <property type="project" value="TreeGrafter"/>
</dbReference>
<dbReference type="FunFam" id="3.30.70.260:FF:000002">
    <property type="entry name" value="UPF0250 protein YbeD"/>
    <property type="match status" value="1"/>
</dbReference>
<dbReference type="Gene3D" id="3.30.70.260">
    <property type="match status" value="1"/>
</dbReference>
<dbReference type="HAMAP" id="MF_00659">
    <property type="entry name" value="UPF0250"/>
    <property type="match status" value="1"/>
</dbReference>
<dbReference type="InterPro" id="IPR007454">
    <property type="entry name" value="UPF0250_YbeD-like"/>
</dbReference>
<dbReference type="InterPro" id="IPR027471">
    <property type="entry name" value="YbeD-like_sf"/>
</dbReference>
<dbReference type="NCBIfam" id="NF003447">
    <property type="entry name" value="PRK04998.1"/>
    <property type="match status" value="1"/>
</dbReference>
<dbReference type="PANTHER" id="PTHR38036">
    <property type="entry name" value="UPF0250 PROTEIN YBED"/>
    <property type="match status" value="1"/>
</dbReference>
<dbReference type="PANTHER" id="PTHR38036:SF1">
    <property type="entry name" value="UPF0250 PROTEIN YBED"/>
    <property type="match status" value="1"/>
</dbReference>
<dbReference type="Pfam" id="PF04359">
    <property type="entry name" value="DUF493"/>
    <property type="match status" value="1"/>
</dbReference>
<dbReference type="SUPFAM" id="SSF117991">
    <property type="entry name" value="YbeD/HP0495-like"/>
    <property type="match status" value="1"/>
</dbReference>
<feature type="chain" id="PRO_0000209298" description="UPF0250 protein YbeD">
    <location>
        <begin position="1"/>
        <end position="87"/>
    </location>
</feature>
<evidence type="ECO:0000305" key="1"/>